<dbReference type="EMBL" id="BC134487">
    <property type="protein sequence ID" value="AAI34488.1"/>
    <property type="molecule type" value="mRNA"/>
</dbReference>
<dbReference type="RefSeq" id="NP_001098932.1">
    <property type="nucleotide sequence ID" value="NM_001105462.1"/>
</dbReference>
<dbReference type="SMR" id="A7YWC4"/>
<dbReference type="FunCoup" id="A7YWC4">
    <property type="interactions" value="2197"/>
</dbReference>
<dbReference type="STRING" id="9913.ENSBTAP00000012676"/>
<dbReference type="PaxDb" id="9913-ENSBTAP00000012676"/>
<dbReference type="Ensembl" id="ENSBTAT00000012676.6">
    <property type="protein sequence ID" value="ENSBTAP00000012676.5"/>
    <property type="gene ID" value="ENSBTAG00000002219.7"/>
</dbReference>
<dbReference type="GeneID" id="784353"/>
<dbReference type="KEGG" id="bta:784353"/>
<dbReference type="CTD" id="55210"/>
<dbReference type="VEuPathDB" id="HostDB:ENSBTAG00000002219"/>
<dbReference type="eggNOG" id="KOG0742">
    <property type="taxonomic scope" value="Eukaryota"/>
</dbReference>
<dbReference type="GeneTree" id="ENSGT00730000111059"/>
<dbReference type="HOGENOM" id="CLU_011488_2_0_1"/>
<dbReference type="InParanoid" id="A7YWC4"/>
<dbReference type="OMA" id="HKSITGG"/>
<dbReference type="OrthoDB" id="199596at2759"/>
<dbReference type="TreeFam" id="TF313922"/>
<dbReference type="Reactome" id="R-BTA-6798695">
    <property type="pathway name" value="Neutrophil degranulation"/>
</dbReference>
<dbReference type="Proteomes" id="UP000009136">
    <property type="component" value="Chromosome 16"/>
</dbReference>
<dbReference type="Bgee" id="ENSBTAG00000002219">
    <property type="expression patterns" value="Expressed in digestive system secreted substance and 104 other cell types or tissues"/>
</dbReference>
<dbReference type="GO" id="GO:0044233">
    <property type="term" value="C:mitochondria-associated endoplasmic reticulum membrane contact site"/>
    <property type="evidence" value="ECO:0007669"/>
    <property type="project" value="Ensembl"/>
</dbReference>
<dbReference type="GO" id="GO:0005743">
    <property type="term" value="C:mitochondrial inner membrane"/>
    <property type="evidence" value="ECO:0007669"/>
    <property type="project" value="UniProtKB-SubCell"/>
</dbReference>
<dbReference type="GO" id="GO:0042645">
    <property type="term" value="C:mitochondrial nucleoid"/>
    <property type="evidence" value="ECO:0007669"/>
    <property type="project" value="UniProtKB-SubCell"/>
</dbReference>
<dbReference type="GO" id="GO:0005739">
    <property type="term" value="C:mitochondrion"/>
    <property type="evidence" value="ECO:0000318"/>
    <property type="project" value="GO_Central"/>
</dbReference>
<dbReference type="GO" id="GO:0005524">
    <property type="term" value="F:ATP binding"/>
    <property type="evidence" value="ECO:0007669"/>
    <property type="project" value="UniProtKB-KW"/>
</dbReference>
<dbReference type="GO" id="GO:0016887">
    <property type="term" value="F:ATP hydrolysis activity"/>
    <property type="evidence" value="ECO:0007669"/>
    <property type="project" value="Ensembl"/>
</dbReference>
<dbReference type="GO" id="GO:0030291">
    <property type="term" value="F:protein serine/threonine kinase inhibitor activity"/>
    <property type="evidence" value="ECO:0007669"/>
    <property type="project" value="Ensembl"/>
</dbReference>
<dbReference type="GO" id="GO:0140374">
    <property type="term" value="P:antiviral innate immune response"/>
    <property type="evidence" value="ECO:0007669"/>
    <property type="project" value="Ensembl"/>
</dbReference>
<dbReference type="GO" id="GO:0006974">
    <property type="term" value="P:DNA damage response"/>
    <property type="evidence" value="ECO:0000250"/>
    <property type="project" value="UniProtKB"/>
</dbReference>
<dbReference type="GO" id="GO:0140468">
    <property type="term" value="P:HRI-mediated signaling"/>
    <property type="evidence" value="ECO:0000250"/>
    <property type="project" value="UniProtKB"/>
</dbReference>
<dbReference type="GO" id="GO:0007005">
    <property type="term" value="P:mitochondrion organization"/>
    <property type="evidence" value="ECO:0000318"/>
    <property type="project" value="GO_Central"/>
</dbReference>
<dbReference type="GO" id="GO:0043066">
    <property type="term" value="P:negative regulation of apoptotic process"/>
    <property type="evidence" value="ECO:0007669"/>
    <property type="project" value="Ensembl"/>
</dbReference>
<dbReference type="GO" id="GO:1903898">
    <property type="term" value="P:negative regulation of PERK-mediated unfolded protein response"/>
    <property type="evidence" value="ECO:0007669"/>
    <property type="project" value="Ensembl"/>
</dbReference>
<dbReference type="GO" id="GO:0001558">
    <property type="term" value="P:regulation of cell growth"/>
    <property type="evidence" value="ECO:0007669"/>
    <property type="project" value="Ensembl"/>
</dbReference>
<dbReference type="CDD" id="cd19512">
    <property type="entry name" value="RecA-like_ATAD3-like"/>
    <property type="match status" value="1"/>
</dbReference>
<dbReference type="FunFam" id="3.40.50.300:FF:000470">
    <property type="entry name" value="ATPase family, AAA domain containing 3A"/>
    <property type="match status" value="1"/>
</dbReference>
<dbReference type="Gene3D" id="3.40.50.300">
    <property type="entry name" value="P-loop containing nucleotide triphosphate hydrolases"/>
    <property type="match status" value="1"/>
</dbReference>
<dbReference type="InterPro" id="IPR003593">
    <property type="entry name" value="AAA+_ATPase"/>
</dbReference>
<dbReference type="InterPro" id="IPR021911">
    <property type="entry name" value="ATAD3_N"/>
</dbReference>
<dbReference type="InterPro" id="IPR003959">
    <property type="entry name" value="ATPase_AAA_core"/>
</dbReference>
<dbReference type="InterPro" id="IPR027417">
    <property type="entry name" value="P-loop_NTPase"/>
</dbReference>
<dbReference type="PANTHER" id="PTHR23075:SF0">
    <property type="entry name" value="ATPASE FAMILY AAA DOMAIN-CONTAINING PROTEIN 3"/>
    <property type="match status" value="1"/>
</dbReference>
<dbReference type="PANTHER" id="PTHR23075">
    <property type="entry name" value="PUTATIVE ATP-ASE"/>
    <property type="match status" value="1"/>
</dbReference>
<dbReference type="Pfam" id="PF00004">
    <property type="entry name" value="AAA"/>
    <property type="match status" value="1"/>
</dbReference>
<dbReference type="Pfam" id="PF12037">
    <property type="entry name" value="ATAD3_N"/>
    <property type="match status" value="1"/>
</dbReference>
<dbReference type="SMART" id="SM00382">
    <property type="entry name" value="AAA"/>
    <property type="match status" value="1"/>
</dbReference>
<dbReference type="SUPFAM" id="SSF52540">
    <property type="entry name" value="P-loop containing nucleoside triphosphate hydrolases"/>
    <property type="match status" value="1"/>
</dbReference>
<comment type="function">
    <text evidence="4">Essential for mitochondrial network organization, mitochondrial metabolism and cell growth at organism and cellular level. May play an important role in mitochondrial protein synthesis. May also participate in mitochondrial DNA replication. May bind to mitochondrial DNA D-loops and contribute to nucleoid stability. Required for enhanced channeling of cholesterol for hormone-dependent steroidogenesis. Involved in mitochondrial-mediated antiviral innate immunity. Also involved in the mitochondrial DNA damage response by promoting signaling between damaged genomes and the mitochondrial membrane, leading to activation of the integrated stress response (ISR).</text>
</comment>
<comment type="subunit">
    <text evidence="4">Can form homooligomers. Homodimer formation at the N-terminus may be regulated by ATP and is required for the interaction with the inner surface of the mitochondrial outer membrane and correct mitochondrial homeostasis. Interacts with components of the mitochondrial ribosome and with other proteins involved in mitochondrial RNA metabolism. May also interact with protein involved in lipid metabolism, including STARD9. May interact with FAM210A. Interacts with GADD45GIP1. Interacts with S100B in a Ca(+2)- and Zn(+2)-dependent manner; this interaction probably occurs in the cytosol prior to mitochondrial targeting. S100B could assist ATAD3A cytoplasmic processing, preventing aggregation and favoring mitochondrial localization. Interacts with HSP60/HSPD1. Forms heterooligomers with ATAD3B; this interaction may affect ATAD3A activity. Interacts with CLPB.</text>
</comment>
<comment type="subcellular location">
    <subcellularLocation>
        <location evidence="1">Mitochondrion inner membrane</location>
        <topology evidence="1">Single-pass membrane protein</topology>
    </subcellularLocation>
    <subcellularLocation>
        <location evidence="1">Mitochondrion matrix</location>
        <location evidence="1">Mitochondrion nucleoid</location>
    </subcellularLocation>
    <text evidence="1">In the mitochondrial inner membrane, enriched in sites with the potential to form contacts with the outer membrane. The N-terminal domain interacts with the inner surface of the mitochondrial outer membrane and the C-terminal domain localizes in a specific matrix compartment, where it is associated with nucleoids (By similarity).</text>
</comment>
<comment type="induction">
    <text evidence="7">Up-regulated by Angiotensin/AGT.</text>
</comment>
<comment type="domain">
    <text evidence="1">The transmembrane domain and a C-terminal adjacent region contain all information necessary for mitochondrial targeting.</text>
</comment>
<comment type="similarity">
    <text evidence="8">Belongs to the AAA ATPase family.</text>
</comment>
<reference key="1">
    <citation type="submission" date="2007-03" db="EMBL/GenBank/DDBJ databases">
        <authorList>
            <consortium name="NIH - Mammalian Gene Collection (MGC) project"/>
        </authorList>
    </citation>
    <scope>NUCLEOTIDE SEQUENCE [LARGE SCALE MRNA]</scope>
    <source>
        <strain>Hereford</strain>
        <tissue>Ascending colon</tissue>
    </source>
</reference>
<reference key="2">
    <citation type="journal article" date="2010" name="Mol. Cell. Biol.">
        <title>The AAA+ ATPase ATAD3A controls mitochondrial dynamics at the interface of the inner and outer membranes.</title>
        <authorList>
            <person name="Gilquin B."/>
            <person name="Taillebourg E."/>
            <person name="Cherradi N."/>
            <person name="Hubstenberger A."/>
            <person name="Gay O."/>
            <person name="Merle N."/>
            <person name="Assard N."/>
            <person name="Fauvarque M.O."/>
            <person name="Tomohiro S."/>
            <person name="Kuge O."/>
            <person name="Baudier J."/>
        </authorList>
    </citation>
    <scope>INDUCTION</scope>
</reference>
<sequence length="586" mass="66107">MSWLFGIKGSKGEGTGPPLPLPPVQPGGEGSGDGGAGDRPGPKDKWSNFDPTGLERAAKAARELEHSRHAKEALSLAQMQEQTLQLEHQAKLKEYEAAVEQLKGDQIRVQAEERRKTLSEETRQHQARAQYQDKLARQRYEDQLKQQQLLNEENLRKQEESVQKQEALRRATVEREMELRHKNEMLRVEAEARARAKAERENADIIREQIRLKAAEHRQTILESIRTAGTLFGEGFRAFVTDWDKVTATVAGLTLLAVGIYSAKNATSVAGRYIEARLGKPSLVRETSRITVLEALRHPIQVSRRLLSKPQDALEGVVLSPSLEARVRDIAIATRNTKKNKSLYRNVLMYGPPGTGKTLFAKKLALHSGMDYAIMTGGDVAPMGRDGVTAMHKVFDWASTSRRGLLLFVDEADAFLRKRATEKISEDLRATLNAFLHRTGQHSSKFMLVLASNQPEQFDWAINDRIDEMVSFELPQREERERLVRMYFDKYVLKPATEGKQRLKLAQFDYGKKCSEIAQLTEGMSGREISQLAVAWQAMAYASEDGVLTEAMMDARVQDAIQQHRQKMQWLKAEGSQPPTLRTQAE</sequence>
<keyword id="KW-0007">Acetylation</keyword>
<keyword id="KW-0067">ATP-binding</keyword>
<keyword id="KW-0175">Coiled coil</keyword>
<keyword id="KW-0472">Membrane</keyword>
<keyword id="KW-0496">Mitochondrion</keyword>
<keyword id="KW-0999">Mitochondrion inner membrane</keyword>
<keyword id="KW-1135">Mitochondrion nucleoid</keyword>
<keyword id="KW-0547">Nucleotide-binding</keyword>
<keyword id="KW-1185">Reference proteome</keyword>
<keyword id="KW-0812">Transmembrane</keyword>
<keyword id="KW-1133">Transmembrane helix</keyword>
<gene>
    <name type="primary">ATAD3</name>
</gene>
<organism>
    <name type="scientific">Bos taurus</name>
    <name type="common">Bovine</name>
    <dbReference type="NCBI Taxonomy" id="9913"/>
    <lineage>
        <taxon>Eukaryota</taxon>
        <taxon>Metazoa</taxon>
        <taxon>Chordata</taxon>
        <taxon>Craniata</taxon>
        <taxon>Vertebrata</taxon>
        <taxon>Euteleostomi</taxon>
        <taxon>Mammalia</taxon>
        <taxon>Eutheria</taxon>
        <taxon>Laurasiatheria</taxon>
        <taxon>Artiodactyla</taxon>
        <taxon>Ruminantia</taxon>
        <taxon>Pecora</taxon>
        <taxon>Bovidae</taxon>
        <taxon>Bovinae</taxon>
        <taxon>Bos</taxon>
    </lineage>
</organism>
<feature type="initiator methionine" description="Removed" evidence="2">
    <location>
        <position position="1"/>
    </location>
</feature>
<feature type="chain" id="PRO_0000311980" description="ATPase family AAA domain-containing protein 3">
    <location>
        <begin position="2"/>
        <end position="586"/>
    </location>
</feature>
<feature type="topological domain" description="Mitochondrial intermembrane" evidence="5">
    <location>
        <begin position="2"/>
        <end position="245"/>
    </location>
</feature>
<feature type="transmembrane region" description="Helical" evidence="5">
    <location>
        <begin position="246"/>
        <end position="262"/>
    </location>
</feature>
<feature type="topological domain" description="Mitochondrial matrix" evidence="5">
    <location>
        <begin position="263"/>
        <end position="586"/>
    </location>
</feature>
<feature type="region of interest" description="Disordered" evidence="6">
    <location>
        <begin position="1"/>
        <end position="52"/>
    </location>
</feature>
<feature type="region of interest" description="Required for interaction with the inner surface of the mitochondrial outer membrane" evidence="1">
    <location>
        <begin position="2"/>
        <end position="49"/>
    </location>
</feature>
<feature type="region of interest" description="S100B-binding" evidence="1">
    <location>
        <begin position="289"/>
        <end position="304"/>
    </location>
</feature>
<feature type="coiled-coil region" evidence="5">
    <location>
        <begin position="55"/>
        <end position="218"/>
    </location>
</feature>
<feature type="compositionally biased region" description="Gly residues" evidence="6">
    <location>
        <begin position="27"/>
        <end position="38"/>
    </location>
</feature>
<feature type="binding site" evidence="5">
    <location>
        <begin position="351"/>
        <end position="358"/>
    </location>
    <ligand>
        <name>ATP</name>
        <dbReference type="ChEBI" id="CHEBI:30616"/>
    </ligand>
</feature>
<feature type="modified residue" description="N-acetylserine" evidence="2">
    <location>
        <position position="2"/>
    </location>
</feature>
<feature type="modified residue" description="N6-acetyllysine; alternate" evidence="3">
    <location>
        <position position="490"/>
    </location>
</feature>
<feature type="modified residue" description="N6-succinyllysine; alternate" evidence="3">
    <location>
        <position position="490"/>
    </location>
</feature>
<feature type="modified residue" description="N6-acetyllysine" evidence="3">
    <location>
        <position position="494"/>
    </location>
</feature>
<feature type="modified residue" description="N6-acetyllysine" evidence="3">
    <location>
        <position position="512"/>
    </location>
</feature>
<name>ATAD3_BOVIN</name>
<evidence type="ECO:0000250" key="1"/>
<evidence type="ECO:0000250" key="2">
    <source>
        <dbReference type="UniProtKB" id="Q5T9A4"/>
    </source>
</evidence>
<evidence type="ECO:0000250" key="3">
    <source>
        <dbReference type="UniProtKB" id="Q925I1"/>
    </source>
</evidence>
<evidence type="ECO:0000250" key="4">
    <source>
        <dbReference type="UniProtKB" id="Q9NVI7"/>
    </source>
</evidence>
<evidence type="ECO:0000255" key="5"/>
<evidence type="ECO:0000256" key="6">
    <source>
        <dbReference type="SAM" id="MobiDB-lite"/>
    </source>
</evidence>
<evidence type="ECO:0000269" key="7">
    <source>
    </source>
</evidence>
<evidence type="ECO:0000305" key="8"/>
<accession>A7YWC4</accession>
<protein>
    <recommendedName>
        <fullName>ATPase family AAA domain-containing protein 3</fullName>
    </recommendedName>
</protein>
<proteinExistence type="evidence at transcript level"/>